<evidence type="ECO:0000255" key="1">
    <source>
        <dbReference type="HAMAP-Rule" id="MF_01114"/>
    </source>
</evidence>
<keyword id="KW-0963">Cytoplasm</keyword>
<dbReference type="EMBL" id="AM263198">
    <property type="protein sequence ID" value="CAK21129.1"/>
    <property type="molecule type" value="Genomic_DNA"/>
</dbReference>
<dbReference type="RefSeq" id="WP_011702491.1">
    <property type="nucleotide sequence ID" value="NC_008555.1"/>
</dbReference>
<dbReference type="SMR" id="A0AJE7"/>
<dbReference type="STRING" id="386043.lwe1711"/>
<dbReference type="GeneID" id="61189611"/>
<dbReference type="KEGG" id="lwe:lwe1711"/>
<dbReference type="eggNOG" id="COG2137">
    <property type="taxonomic scope" value="Bacteria"/>
</dbReference>
<dbReference type="HOGENOM" id="CLU_066607_4_0_9"/>
<dbReference type="OrthoDB" id="5421057at2"/>
<dbReference type="Proteomes" id="UP000000779">
    <property type="component" value="Chromosome"/>
</dbReference>
<dbReference type="GO" id="GO:0005737">
    <property type="term" value="C:cytoplasm"/>
    <property type="evidence" value="ECO:0007669"/>
    <property type="project" value="UniProtKB-SubCell"/>
</dbReference>
<dbReference type="GO" id="GO:0006282">
    <property type="term" value="P:regulation of DNA repair"/>
    <property type="evidence" value="ECO:0007669"/>
    <property type="project" value="UniProtKB-UniRule"/>
</dbReference>
<dbReference type="Gene3D" id="1.10.10.10">
    <property type="entry name" value="Winged helix-like DNA-binding domain superfamily/Winged helix DNA-binding domain"/>
    <property type="match status" value="4"/>
</dbReference>
<dbReference type="HAMAP" id="MF_01114">
    <property type="entry name" value="RecX"/>
    <property type="match status" value="1"/>
</dbReference>
<dbReference type="InterPro" id="IPR053926">
    <property type="entry name" value="RecX_HTH_1st"/>
</dbReference>
<dbReference type="InterPro" id="IPR053924">
    <property type="entry name" value="RecX_HTH_2nd"/>
</dbReference>
<dbReference type="InterPro" id="IPR053925">
    <property type="entry name" value="RecX_HTH_3rd"/>
</dbReference>
<dbReference type="InterPro" id="IPR003783">
    <property type="entry name" value="Regulatory_RecX"/>
</dbReference>
<dbReference type="InterPro" id="IPR036388">
    <property type="entry name" value="WH-like_DNA-bd_sf"/>
</dbReference>
<dbReference type="NCBIfam" id="NF010733">
    <property type="entry name" value="PRK14135.1"/>
    <property type="match status" value="1"/>
</dbReference>
<dbReference type="PANTHER" id="PTHR33602">
    <property type="entry name" value="REGULATORY PROTEIN RECX FAMILY PROTEIN"/>
    <property type="match status" value="1"/>
</dbReference>
<dbReference type="PANTHER" id="PTHR33602:SF1">
    <property type="entry name" value="REGULATORY PROTEIN RECX FAMILY PROTEIN"/>
    <property type="match status" value="1"/>
</dbReference>
<dbReference type="Pfam" id="PF21982">
    <property type="entry name" value="RecX_HTH1"/>
    <property type="match status" value="1"/>
</dbReference>
<dbReference type="Pfam" id="PF02631">
    <property type="entry name" value="RecX_HTH2"/>
    <property type="match status" value="1"/>
</dbReference>
<dbReference type="Pfam" id="PF21981">
    <property type="entry name" value="RecX_HTH3"/>
    <property type="match status" value="1"/>
</dbReference>
<protein>
    <recommendedName>
        <fullName evidence="1">Regulatory protein RecX</fullName>
    </recommendedName>
</protein>
<accession>A0AJE7</accession>
<sequence>MKITSISVQQKNKERYNIFIDEKYNFSVDEEVLARFQLMKGKVLTEAEIEEIKQADMVRKGLNKAINFLSHRVRSEKEIRDYLKKQEMEPFAIDEILKKLADMDYINDVEFAELYTKTQIKTTLKGPRTIERELVEKGLTREIISQVIEEYSDENQLENATKQAMKIMKRNNKSAKKMLQQKITTDLIQKGYSSEVAKAASLEATNELDMADEADILQKQIEKTMRKNKRYKPSVAKQKTITSLMQKGFSYDTIQSYLTENEISFEEEE</sequence>
<feature type="chain" id="PRO_1000065185" description="Regulatory protein RecX">
    <location>
        <begin position="1"/>
        <end position="269"/>
    </location>
</feature>
<comment type="function">
    <text evidence="1">Modulates RecA activity.</text>
</comment>
<comment type="subcellular location">
    <subcellularLocation>
        <location evidence="1">Cytoplasm</location>
    </subcellularLocation>
</comment>
<comment type="similarity">
    <text evidence="1">Belongs to the RecX family.</text>
</comment>
<name>RECX_LISW6</name>
<reference key="1">
    <citation type="journal article" date="2006" name="J. Bacteriol.">
        <title>Whole-genome sequence of Listeria welshimeri reveals common steps in genome reduction with Listeria innocua as compared to Listeria monocytogenes.</title>
        <authorList>
            <person name="Hain T."/>
            <person name="Steinweg C."/>
            <person name="Kuenne C.T."/>
            <person name="Billion A."/>
            <person name="Ghai R."/>
            <person name="Chatterjee S.S."/>
            <person name="Domann E."/>
            <person name="Kaerst U."/>
            <person name="Goesmann A."/>
            <person name="Bekel T."/>
            <person name="Bartels D."/>
            <person name="Kaiser O."/>
            <person name="Meyer F."/>
            <person name="Puehler A."/>
            <person name="Weisshaar B."/>
            <person name="Wehland J."/>
            <person name="Liang C."/>
            <person name="Dandekar T."/>
            <person name="Lampidis R."/>
            <person name="Kreft J."/>
            <person name="Goebel W."/>
            <person name="Chakraborty T."/>
        </authorList>
    </citation>
    <scope>NUCLEOTIDE SEQUENCE [LARGE SCALE GENOMIC DNA]</scope>
    <source>
        <strain>ATCC 35897 / DSM 20650 / CCUG 15529 / CIP 8149 / NCTC 11857 / SLCC 5334 / V8</strain>
    </source>
</reference>
<proteinExistence type="inferred from homology"/>
<gene>
    <name evidence="1" type="primary">recX</name>
    <name type="ordered locus">lwe1711</name>
</gene>
<organism>
    <name type="scientific">Listeria welshimeri serovar 6b (strain ATCC 35897 / DSM 20650 / CCUG 15529 / CIP 8149 / NCTC 11857 / SLCC 5334 / V8)</name>
    <dbReference type="NCBI Taxonomy" id="386043"/>
    <lineage>
        <taxon>Bacteria</taxon>
        <taxon>Bacillati</taxon>
        <taxon>Bacillota</taxon>
        <taxon>Bacilli</taxon>
        <taxon>Bacillales</taxon>
        <taxon>Listeriaceae</taxon>
        <taxon>Listeria</taxon>
    </lineage>
</organism>